<sequence length="382" mass="42543">MENKQCDHLTDWFSTTSDASESMDTTPPLPPPTPSVDPSYSGAAADEDLYSDISEGDLEYSDCDSASESDEDDDDCLIPSKEKAREVAASFGYTVIKTLTPGSEGRVMVATKDGQPEPVVLKIGQKGTTLIEAMMLRNVNHPSVIQMKDTLVSGAITCMVLPHYSSDLYTFLTKESRRIPIDQALIIEKQILEGLRYLHAQRIIHRDVKTENIFINSVDQVCIADFGAAQFPVVEPADLGLAGTVETNAPEVLARAKYNSKADIWSAGIVLFEMLAYPSTLFEDPPSTPEEYVKSCHSQLLKIISTLKINPEEFPRDPGSRLVRGYIEYSRLERKPYTRYPCFQRVNLHIDGEFLVHKMLAFNAAMRPSAEELLSYPMFAQL</sequence>
<protein>
    <recommendedName>
        <fullName>Serine/threonine-protein kinase US3 homolog</fullName>
        <ecNumber>2.7.11.1</ecNumber>
    </recommendedName>
</protein>
<organism>
    <name type="scientific">Equine herpesvirus 1 (strain Ab4p)</name>
    <name type="common">EHV-1</name>
    <name type="synonym">Equine abortion virus</name>
    <dbReference type="NCBI Taxonomy" id="31520"/>
    <lineage>
        <taxon>Viruses</taxon>
        <taxon>Duplodnaviria</taxon>
        <taxon>Heunggongvirae</taxon>
        <taxon>Peploviricota</taxon>
        <taxon>Herviviricetes</taxon>
        <taxon>Herpesvirales</taxon>
        <taxon>Orthoherpesviridae</taxon>
        <taxon>Alphaherpesvirinae</taxon>
        <taxon>Varicellovirus</taxon>
        <taxon>Varicellovirus equidalpha1</taxon>
        <taxon>Equid alphaherpesvirus 1</taxon>
    </lineage>
</organism>
<name>US03_EHV1B</name>
<organismHost>
    <name type="scientific">Equus caballus</name>
    <name type="common">Horse</name>
    <dbReference type="NCBI Taxonomy" id="9796"/>
</organismHost>
<evidence type="ECO:0000250" key="1"/>
<evidence type="ECO:0000255" key="2">
    <source>
        <dbReference type="PROSITE-ProRule" id="PRU00159"/>
    </source>
</evidence>
<evidence type="ECO:0000255" key="3">
    <source>
        <dbReference type="PROSITE-ProRule" id="PRU10027"/>
    </source>
</evidence>
<evidence type="ECO:0000256" key="4">
    <source>
        <dbReference type="SAM" id="MobiDB-lite"/>
    </source>
</evidence>
<accession>P28926</accession>
<accession>Q6S6W2</accession>
<comment type="function">
    <text evidence="1">Multifunctional serine/threonine kinase that plays a role in several processes including egress of virus particles from the nucleus, modulation of the actin cytoskeleton and inhibition of apoptosis. Phosphorylates protein 26 and 29, two critical regulators of capsid budding from nucleus to endoplasmic reticulum, thereby facilitating virion egress. Modulates and redistributes host components of the nuclear envelope, including LMNA, emerin/EMD and the nuclear matrix protein MATR3. Phosphorylates envelope glycoprotein B (gB), probably to direct it to the cell surface. Promotes virus intracellular spread by restructuring host cell cytoskeleton. Blocks host apoptosis to extend cell survival and allow efficient viral replication. Promotes viral gene expression by phosphorylating host HDAC2 to reduce viral genome silencing (By similarity).</text>
</comment>
<comment type="catalytic activity">
    <reaction>
        <text>L-seryl-[protein] + ATP = O-phospho-L-seryl-[protein] + ADP + H(+)</text>
        <dbReference type="Rhea" id="RHEA:17989"/>
        <dbReference type="Rhea" id="RHEA-COMP:9863"/>
        <dbReference type="Rhea" id="RHEA-COMP:11604"/>
        <dbReference type="ChEBI" id="CHEBI:15378"/>
        <dbReference type="ChEBI" id="CHEBI:29999"/>
        <dbReference type="ChEBI" id="CHEBI:30616"/>
        <dbReference type="ChEBI" id="CHEBI:83421"/>
        <dbReference type="ChEBI" id="CHEBI:456216"/>
        <dbReference type="EC" id="2.7.11.1"/>
    </reaction>
</comment>
<comment type="catalytic activity">
    <reaction>
        <text>L-threonyl-[protein] + ATP = O-phospho-L-threonyl-[protein] + ADP + H(+)</text>
        <dbReference type="Rhea" id="RHEA:46608"/>
        <dbReference type="Rhea" id="RHEA-COMP:11060"/>
        <dbReference type="Rhea" id="RHEA-COMP:11605"/>
        <dbReference type="ChEBI" id="CHEBI:15378"/>
        <dbReference type="ChEBI" id="CHEBI:30013"/>
        <dbReference type="ChEBI" id="CHEBI:30616"/>
        <dbReference type="ChEBI" id="CHEBI:61977"/>
        <dbReference type="ChEBI" id="CHEBI:456216"/>
        <dbReference type="EC" id="2.7.11.1"/>
    </reaction>
</comment>
<comment type="subcellular location">
    <subcellularLocation>
        <location evidence="1">Host cytoplasm</location>
    </subcellularLocation>
    <subcellularLocation>
        <location evidence="1">Host nucleus</location>
    </subcellularLocation>
</comment>
<comment type="PTM">
    <text evidence="1">Phosphorylated by protein 49; this phosphorylation regulates subsequent phosphorylation of proteins 26 and 29 by US3 homolog. Autophosphorylated (By similarity).</text>
</comment>
<comment type="similarity">
    <text evidence="2">Belongs to the protein kinase superfamily. Ser/Thr protein kinase family.</text>
</comment>
<gene>
    <name type="ordered locus">69</name>
</gene>
<feature type="chain" id="PRO_0000086177" description="Serine/threonine-protein kinase US3 homolog">
    <location>
        <begin position="1"/>
        <end position="382"/>
    </location>
</feature>
<feature type="domain" description="Protein kinase" evidence="2">
    <location>
        <begin position="93"/>
        <end position="379"/>
    </location>
</feature>
<feature type="region of interest" description="Disordered" evidence="4">
    <location>
        <begin position="1"/>
        <end position="75"/>
    </location>
</feature>
<feature type="compositionally biased region" description="Basic and acidic residues" evidence="4">
    <location>
        <begin position="1"/>
        <end position="10"/>
    </location>
</feature>
<feature type="compositionally biased region" description="Polar residues" evidence="4">
    <location>
        <begin position="12"/>
        <end position="24"/>
    </location>
</feature>
<feature type="compositionally biased region" description="Acidic residues" evidence="4">
    <location>
        <begin position="45"/>
        <end position="75"/>
    </location>
</feature>
<feature type="active site" description="Proton acceptor" evidence="2 3">
    <location>
        <position position="207"/>
    </location>
</feature>
<feature type="binding site" evidence="2">
    <location>
        <begin position="99"/>
        <end position="107"/>
    </location>
    <ligand>
        <name>ATP</name>
        <dbReference type="ChEBI" id="CHEBI:30616"/>
    </ligand>
</feature>
<feature type="binding site" evidence="2">
    <location>
        <position position="122"/>
    </location>
    <ligand>
        <name>ATP</name>
        <dbReference type="ChEBI" id="CHEBI:30616"/>
    </ligand>
</feature>
<keyword id="KW-0067">ATP-binding</keyword>
<keyword id="KW-1035">Host cytoplasm</keyword>
<keyword id="KW-1048">Host nucleus</keyword>
<keyword id="KW-0945">Host-virus interaction</keyword>
<keyword id="KW-0418">Kinase</keyword>
<keyword id="KW-1119">Modulation of host cell apoptosis by virus</keyword>
<keyword id="KW-1122">Modulation of host chromatin by virus</keyword>
<keyword id="KW-0547">Nucleotide-binding</keyword>
<keyword id="KW-1185">Reference proteome</keyword>
<keyword id="KW-0723">Serine/threonine-protein kinase</keyword>
<keyword id="KW-0808">Transferase</keyword>
<reference key="1">
    <citation type="journal article" date="1992" name="Virology">
        <title>The DNA sequence of equine herpesvirus-1.</title>
        <authorList>
            <person name="Telford E.A.R."/>
            <person name="Watson M.S."/>
            <person name="McBride K."/>
            <person name="Davison A.J."/>
        </authorList>
    </citation>
    <scope>NUCLEOTIDE SEQUENCE [LARGE SCALE GENOMIC DNA]</scope>
</reference>
<proteinExistence type="inferred from homology"/>
<dbReference type="EC" id="2.7.11.1"/>
<dbReference type="EMBL" id="AY665713">
    <property type="protein sequence ID" value="AAT67326.1"/>
    <property type="molecule type" value="Genomic_DNA"/>
</dbReference>
<dbReference type="PIR" id="F36802">
    <property type="entry name" value="TVBEG1"/>
</dbReference>
<dbReference type="SMR" id="P28926"/>
<dbReference type="KEGG" id="vg:2948581"/>
<dbReference type="Proteomes" id="UP000001189">
    <property type="component" value="Segment"/>
</dbReference>
<dbReference type="GO" id="GO:0030430">
    <property type="term" value="C:host cell cytoplasm"/>
    <property type="evidence" value="ECO:0007669"/>
    <property type="project" value="UniProtKB-SubCell"/>
</dbReference>
<dbReference type="GO" id="GO:0042025">
    <property type="term" value="C:host cell nucleus"/>
    <property type="evidence" value="ECO:0007669"/>
    <property type="project" value="UniProtKB-SubCell"/>
</dbReference>
<dbReference type="GO" id="GO:0005524">
    <property type="term" value="F:ATP binding"/>
    <property type="evidence" value="ECO:0007669"/>
    <property type="project" value="UniProtKB-KW"/>
</dbReference>
<dbReference type="GO" id="GO:0106310">
    <property type="term" value="F:protein serine kinase activity"/>
    <property type="evidence" value="ECO:0007669"/>
    <property type="project" value="RHEA"/>
</dbReference>
<dbReference type="GO" id="GO:0004674">
    <property type="term" value="F:protein serine/threonine kinase activity"/>
    <property type="evidence" value="ECO:0007669"/>
    <property type="project" value="UniProtKB-KW"/>
</dbReference>
<dbReference type="GO" id="GO:0052150">
    <property type="term" value="P:symbiont-mediated perturbation of host apoptosis"/>
    <property type="evidence" value="ECO:0007669"/>
    <property type="project" value="UniProtKB-KW"/>
</dbReference>
<dbReference type="GO" id="GO:0039525">
    <property type="term" value="P:symbiont-mediated perturbation of host chromatin organization"/>
    <property type="evidence" value="ECO:0007669"/>
    <property type="project" value="UniProtKB-KW"/>
</dbReference>
<dbReference type="CDD" id="cd00180">
    <property type="entry name" value="PKc"/>
    <property type="match status" value="1"/>
</dbReference>
<dbReference type="Gene3D" id="3.30.200.20">
    <property type="entry name" value="Phosphorylase Kinase, domain 1"/>
    <property type="match status" value="1"/>
</dbReference>
<dbReference type="Gene3D" id="1.10.510.10">
    <property type="entry name" value="Transferase(Phosphotransferase) domain 1"/>
    <property type="match status" value="1"/>
</dbReference>
<dbReference type="InterPro" id="IPR011009">
    <property type="entry name" value="Kinase-like_dom_sf"/>
</dbReference>
<dbReference type="InterPro" id="IPR050660">
    <property type="entry name" value="NEK_Ser/Thr_kinase"/>
</dbReference>
<dbReference type="InterPro" id="IPR000719">
    <property type="entry name" value="Prot_kinase_dom"/>
</dbReference>
<dbReference type="InterPro" id="IPR008271">
    <property type="entry name" value="Ser/Thr_kinase_AS"/>
</dbReference>
<dbReference type="PANTHER" id="PTHR43671">
    <property type="entry name" value="SERINE/THREONINE-PROTEIN KINASE NEK"/>
    <property type="match status" value="1"/>
</dbReference>
<dbReference type="PANTHER" id="PTHR43671:SF98">
    <property type="entry name" value="SERINE_THREONINE-PROTEIN KINASE NEK11"/>
    <property type="match status" value="1"/>
</dbReference>
<dbReference type="Pfam" id="PF00069">
    <property type="entry name" value="Pkinase"/>
    <property type="match status" value="1"/>
</dbReference>
<dbReference type="SMART" id="SM00220">
    <property type="entry name" value="S_TKc"/>
    <property type="match status" value="1"/>
</dbReference>
<dbReference type="SUPFAM" id="SSF56112">
    <property type="entry name" value="Protein kinase-like (PK-like)"/>
    <property type="match status" value="1"/>
</dbReference>
<dbReference type="PROSITE" id="PS50011">
    <property type="entry name" value="PROTEIN_KINASE_DOM"/>
    <property type="match status" value="1"/>
</dbReference>
<dbReference type="PROSITE" id="PS00108">
    <property type="entry name" value="PROTEIN_KINASE_ST"/>
    <property type="match status" value="1"/>
</dbReference>